<gene>
    <name evidence="1" type="primary">purL</name>
    <name type="ordered locus">Plav_2586</name>
</gene>
<comment type="function">
    <text evidence="1">Part of the phosphoribosylformylglycinamidine synthase complex involved in the purines biosynthetic pathway. Catalyzes the ATP-dependent conversion of formylglycinamide ribonucleotide (FGAR) and glutamine to yield formylglycinamidine ribonucleotide (FGAM) and glutamate. The FGAM synthase complex is composed of three subunits. PurQ produces an ammonia molecule by converting glutamine to glutamate. PurL transfers the ammonia molecule to FGAR to form FGAM in an ATP-dependent manner. PurS interacts with PurQ and PurL and is thought to assist in the transfer of the ammonia molecule from PurQ to PurL.</text>
</comment>
<comment type="catalytic activity">
    <reaction evidence="1">
        <text>N(2)-formyl-N(1)-(5-phospho-beta-D-ribosyl)glycinamide + L-glutamine + ATP + H2O = 2-formamido-N(1)-(5-O-phospho-beta-D-ribosyl)acetamidine + L-glutamate + ADP + phosphate + H(+)</text>
        <dbReference type="Rhea" id="RHEA:17129"/>
        <dbReference type="ChEBI" id="CHEBI:15377"/>
        <dbReference type="ChEBI" id="CHEBI:15378"/>
        <dbReference type="ChEBI" id="CHEBI:29985"/>
        <dbReference type="ChEBI" id="CHEBI:30616"/>
        <dbReference type="ChEBI" id="CHEBI:43474"/>
        <dbReference type="ChEBI" id="CHEBI:58359"/>
        <dbReference type="ChEBI" id="CHEBI:147286"/>
        <dbReference type="ChEBI" id="CHEBI:147287"/>
        <dbReference type="ChEBI" id="CHEBI:456216"/>
        <dbReference type="EC" id="6.3.5.3"/>
    </reaction>
</comment>
<comment type="pathway">
    <text evidence="1">Purine metabolism; IMP biosynthesis via de novo pathway; 5-amino-1-(5-phospho-D-ribosyl)imidazole from N(2)-formyl-N(1)-(5-phospho-D-ribosyl)glycinamide: step 1/2.</text>
</comment>
<comment type="subunit">
    <text evidence="1">Monomer. Part of the FGAM synthase complex composed of 1 PurL, 1 PurQ and 2 PurS subunits.</text>
</comment>
<comment type="subcellular location">
    <subcellularLocation>
        <location evidence="1">Cytoplasm</location>
    </subcellularLocation>
</comment>
<comment type="similarity">
    <text evidence="1">Belongs to the FGAMS family.</text>
</comment>
<accession>A7HWB1</accession>
<reference key="1">
    <citation type="journal article" date="2011" name="Stand. Genomic Sci.">
        <title>Complete genome sequence of Parvibaculum lavamentivorans type strain (DS-1(T)).</title>
        <authorList>
            <person name="Schleheck D."/>
            <person name="Weiss M."/>
            <person name="Pitluck S."/>
            <person name="Bruce D."/>
            <person name="Land M.L."/>
            <person name="Han S."/>
            <person name="Saunders E."/>
            <person name="Tapia R."/>
            <person name="Detter C."/>
            <person name="Brettin T."/>
            <person name="Han J."/>
            <person name="Woyke T."/>
            <person name="Goodwin L."/>
            <person name="Pennacchio L."/>
            <person name="Nolan M."/>
            <person name="Cook A.M."/>
            <person name="Kjelleberg S."/>
            <person name="Thomas T."/>
        </authorList>
    </citation>
    <scope>NUCLEOTIDE SEQUENCE [LARGE SCALE GENOMIC DNA]</scope>
    <source>
        <strain>DS-1 / DSM 13023 / NCIMB 13966</strain>
    </source>
</reference>
<evidence type="ECO:0000255" key="1">
    <source>
        <dbReference type="HAMAP-Rule" id="MF_00420"/>
    </source>
</evidence>
<organism>
    <name type="scientific">Parvibaculum lavamentivorans (strain DS-1 / DSM 13023 / NCIMB 13966)</name>
    <dbReference type="NCBI Taxonomy" id="402881"/>
    <lineage>
        <taxon>Bacteria</taxon>
        <taxon>Pseudomonadati</taxon>
        <taxon>Pseudomonadota</taxon>
        <taxon>Alphaproteobacteria</taxon>
        <taxon>Hyphomicrobiales</taxon>
        <taxon>Parvibaculaceae</taxon>
        <taxon>Parvibaculum</taxon>
    </lineage>
</organism>
<feature type="chain" id="PRO_1000080553" description="Phosphoribosylformylglycinamidine synthase subunit PurL">
    <location>
        <begin position="1"/>
        <end position="739"/>
    </location>
</feature>
<feature type="active site" evidence="1">
    <location>
        <position position="49"/>
    </location>
</feature>
<feature type="active site" description="Proton acceptor" evidence="1">
    <location>
        <position position="95"/>
    </location>
</feature>
<feature type="binding site" evidence="1">
    <location>
        <position position="52"/>
    </location>
    <ligand>
        <name>ATP</name>
        <dbReference type="ChEBI" id="CHEBI:30616"/>
    </ligand>
</feature>
<feature type="binding site" evidence="1">
    <location>
        <position position="91"/>
    </location>
    <ligand>
        <name>ATP</name>
        <dbReference type="ChEBI" id="CHEBI:30616"/>
    </ligand>
</feature>
<feature type="binding site" evidence="1">
    <location>
        <position position="93"/>
    </location>
    <ligand>
        <name>Mg(2+)</name>
        <dbReference type="ChEBI" id="CHEBI:18420"/>
        <label>1</label>
    </ligand>
</feature>
<feature type="binding site" evidence="1">
    <location>
        <begin position="94"/>
        <end position="97"/>
    </location>
    <ligand>
        <name>substrate</name>
    </ligand>
</feature>
<feature type="binding site" evidence="1">
    <location>
        <position position="116"/>
    </location>
    <ligand>
        <name>substrate</name>
    </ligand>
</feature>
<feature type="binding site" evidence="1">
    <location>
        <position position="117"/>
    </location>
    <ligand>
        <name>Mg(2+)</name>
        <dbReference type="ChEBI" id="CHEBI:18420"/>
        <label>2</label>
    </ligand>
</feature>
<feature type="binding site" evidence="1">
    <location>
        <position position="240"/>
    </location>
    <ligand>
        <name>substrate</name>
    </ligand>
</feature>
<feature type="binding site" evidence="1">
    <location>
        <position position="268"/>
    </location>
    <ligand>
        <name>Mg(2+)</name>
        <dbReference type="ChEBI" id="CHEBI:18420"/>
        <label>2</label>
    </ligand>
</feature>
<feature type="binding site" evidence="1">
    <location>
        <begin position="312"/>
        <end position="314"/>
    </location>
    <ligand>
        <name>substrate</name>
    </ligand>
</feature>
<feature type="binding site" evidence="1">
    <location>
        <position position="493"/>
    </location>
    <ligand>
        <name>ATP</name>
        <dbReference type="ChEBI" id="CHEBI:30616"/>
    </ligand>
</feature>
<feature type="binding site" evidence="1">
    <location>
        <position position="530"/>
    </location>
    <ligand>
        <name>ATP</name>
        <dbReference type="ChEBI" id="CHEBI:30616"/>
    </ligand>
</feature>
<feature type="binding site" evidence="1">
    <location>
        <position position="531"/>
    </location>
    <ligand>
        <name>Mg(2+)</name>
        <dbReference type="ChEBI" id="CHEBI:18420"/>
        <label>1</label>
    </ligand>
</feature>
<feature type="binding site" evidence="1">
    <location>
        <position position="533"/>
    </location>
    <ligand>
        <name>substrate</name>
    </ligand>
</feature>
<dbReference type="EC" id="6.3.5.3" evidence="1"/>
<dbReference type="EMBL" id="CP000774">
    <property type="protein sequence ID" value="ABS64194.1"/>
    <property type="molecule type" value="Genomic_DNA"/>
</dbReference>
<dbReference type="SMR" id="A7HWB1"/>
<dbReference type="STRING" id="402881.Plav_2586"/>
<dbReference type="KEGG" id="pla:Plav_2586"/>
<dbReference type="eggNOG" id="COG0046">
    <property type="taxonomic scope" value="Bacteria"/>
</dbReference>
<dbReference type="HOGENOM" id="CLU_003100_0_1_5"/>
<dbReference type="OrthoDB" id="9804441at2"/>
<dbReference type="UniPathway" id="UPA00074">
    <property type="reaction ID" value="UER00128"/>
</dbReference>
<dbReference type="Proteomes" id="UP000006377">
    <property type="component" value="Chromosome"/>
</dbReference>
<dbReference type="GO" id="GO:0005737">
    <property type="term" value="C:cytoplasm"/>
    <property type="evidence" value="ECO:0007669"/>
    <property type="project" value="UniProtKB-SubCell"/>
</dbReference>
<dbReference type="GO" id="GO:0005524">
    <property type="term" value="F:ATP binding"/>
    <property type="evidence" value="ECO:0007669"/>
    <property type="project" value="UniProtKB-UniRule"/>
</dbReference>
<dbReference type="GO" id="GO:0000287">
    <property type="term" value="F:magnesium ion binding"/>
    <property type="evidence" value="ECO:0007669"/>
    <property type="project" value="UniProtKB-UniRule"/>
</dbReference>
<dbReference type="GO" id="GO:0004642">
    <property type="term" value="F:phosphoribosylformylglycinamidine synthase activity"/>
    <property type="evidence" value="ECO:0007669"/>
    <property type="project" value="UniProtKB-UniRule"/>
</dbReference>
<dbReference type="GO" id="GO:0006189">
    <property type="term" value="P:'de novo' IMP biosynthetic process"/>
    <property type="evidence" value="ECO:0007669"/>
    <property type="project" value="UniProtKB-UniRule"/>
</dbReference>
<dbReference type="CDD" id="cd02203">
    <property type="entry name" value="PurL_repeat1"/>
    <property type="match status" value="1"/>
</dbReference>
<dbReference type="CDD" id="cd02204">
    <property type="entry name" value="PurL_repeat2"/>
    <property type="match status" value="1"/>
</dbReference>
<dbReference type="FunFam" id="3.30.1330.10:FF:000004">
    <property type="entry name" value="Phosphoribosylformylglycinamidine synthase subunit PurL"/>
    <property type="match status" value="1"/>
</dbReference>
<dbReference type="Gene3D" id="3.90.650.10">
    <property type="entry name" value="PurM-like C-terminal domain"/>
    <property type="match status" value="2"/>
</dbReference>
<dbReference type="Gene3D" id="3.30.1330.10">
    <property type="entry name" value="PurM-like, N-terminal domain"/>
    <property type="match status" value="2"/>
</dbReference>
<dbReference type="HAMAP" id="MF_00420">
    <property type="entry name" value="PurL_2"/>
    <property type="match status" value="1"/>
</dbReference>
<dbReference type="InterPro" id="IPR010074">
    <property type="entry name" value="PRibForGlyAmidine_synth_PurL"/>
</dbReference>
<dbReference type="InterPro" id="IPR041609">
    <property type="entry name" value="PurL_linker"/>
</dbReference>
<dbReference type="InterPro" id="IPR010918">
    <property type="entry name" value="PurM-like_C_dom"/>
</dbReference>
<dbReference type="InterPro" id="IPR036676">
    <property type="entry name" value="PurM-like_C_sf"/>
</dbReference>
<dbReference type="InterPro" id="IPR016188">
    <property type="entry name" value="PurM-like_N"/>
</dbReference>
<dbReference type="InterPro" id="IPR036921">
    <property type="entry name" value="PurM-like_N_sf"/>
</dbReference>
<dbReference type="NCBIfam" id="TIGR01736">
    <property type="entry name" value="FGAM_synth_II"/>
    <property type="match status" value="1"/>
</dbReference>
<dbReference type="NCBIfam" id="NF002290">
    <property type="entry name" value="PRK01213.1"/>
    <property type="match status" value="1"/>
</dbReference>
<dbReference type="PANTHER" id="PTHR43555">
    <property type="entry name" value="PHOSPHORIBOSYLFORMYLGLYCINAMIDINE SYNTHASE SUBUNIT PURL"/>
    <property type="match status" value="1"/>
</dbReference>
<dbReference type="PANTHER" id="PTHR43555:SF1">
    <property type="entry name" value="PHOSPHORIBOSYLFORMYLGLYCINAMIDINE SYNTHASE SUBUNIT PURL"/>
    <property type="match status" value="1"/>
</dbReference>
<dbReference type="Pfam" id="PF00586">
    <property type="entry name" value="AIRS"/>
    <property type="match status" value="2"/>
</dbReference>
<dbReference type="Pfam" id="PF02769">
    <property type="entry name" value="AIRS_C"/>
    <property type="match status" value="2"/>
</dbReference>
<dbReference type="Pfam" id="PF18072">
    <property type="entry name" value="FGAR-AT_linker"/>
    <property type="match status" value="1"/>
</dbReference>
<dbReference type="PIRSF" id="PIRSF001587">
    <property type="entry name" value="FGAM_synthase_II"/>
    <property type="match status" value="1"/>
</dbReference>
<dbReference type="SUPFAM" id="SSF56042">
    <property type="entry name" value="PurM C-terminal domain-like"/>
    <property type="match status" value="2"/>
</dbReference>
<dbReference type="SUPFAM" id="SSF55326">
    <property type="entry name" value="PurM N-terminal domain-like"/>
    <property type="match status" value="2"/>
</dbReference>
<name>PURL_PARL1</name>
<proteinExistence type="inferred from homology"/>
<protein>
    <recommendedName>
        <fullName evidence="1">Phosphoribosylformylglycinamidine synthase subunit PurL</fullName>
        <shortName evidence="1">FGAM synthase</shortName>
        <ecNumber evidence="1">6.3.5.3</ecNumber>
    </recommendedName>
    <alternativeName>
        <fullName evidence="1">Formylglycinamide ribonucleotide amidotransferase subunit II</fullName>
        <shortName evidence="1">FGAR amidotransferase II</shortName>
        <shortName evidence="1">FGAR-AT II</shortName>
    </alternativeName>
    <alternativeName>
        <fullName evidence="1">Glutamine amidotransferase PurL</fullName>
    </alternativeName>
    <alternativeName>
        <fullName evidence="1">Phosphoribosylformylglycinamidine synthase subunit II</fullName>
    </alternativeName>
</protein>
<sequence>MIPNDVRITPELIAEHGLKPDEYQRILDLIGREPTLTELGIFSAMWNEHCSYKSSKKWLRTLPTTGPRVICGPGENAGVVDIGDGQAIIFKMESHNHPSYIEPHEGAATGVGGILRDVFTMGARPVAALNALRFGAPDHPRTRHIVSGVVAGIGGYGNSFGVPTIGGEVNFDPSYNGNCLVNAFAAGLADADKIFYSEAKGVGLPIVYLGSKTGRDGIHGATMASAEFGENSEEKRPTVQIGDPFSEKLLLEACLELMASGAVIAIQDMGAAGLTCSAVEMGAKGDLGVELDLDKVPCREDGMTAYEMMLSESQERMLMVLDPAKEKEAEAIFVKWGLDFAIIGKTTDDLRFRIKRHGQVMADLPIKDLGDQAPEYDRPWIAPVKPEPLDPSSVPAPNNIGEILVRMLGLPDMCSRRWVWEQYDHLIQGNTAIGPGGDAAVIRVERGPKGLAFTLDVTPRYCAADPREGGKQAVAECWRNLTAVGAEPLAITDNLNFGNPEKPDIMGQFVGCIEGIGDACRALDFPVVSGNVSLYNETNGKGILPTPAIGAVGLLDNFEERVTIAFKAEGEAIVLIGETKGHLGQSIYLRDIAGKTDDRSAPPPVDLAVERRNGDFVRAEIRAGRTTAVHDISDGGILVALAEMAMAGGIGASVKPETALPLHAWAFGEDQARYLVTMPENEAKAFIARAEKAGIPATRLGTTGGNELTLNGGVPISLAGIKAAHEGWLPAYMAAGAEL</sequence>
<keyword id="KW-0067">ATP-binding</keyword>
<keyword id="KW-0963">Cytoplasm</keyword>
<keyword id="KW-0436">Ligase</keyword>
<keyword id="KW-0460">Magnesium</keyword>
<keyword id="KW-0479">Metal-binding</keyword>
<keyword id="KW-0547">Nucleotide-binding</keyword>
<keyword id="KW-0658">Purine biosynthesis</keyword>
<keyword id="KW-1185">Reference proteome</keyword>